<comment type="function">
    <text evidence="3">Catalyzes sulfur activation and mobilization in iron-sulfur cluster formation (ISC) pathway for iron-sulfur (Fe-S) cluster biogenesis (PubMed:34032321). Active when in complex with a partner protein Isd11 (PubMed:34032321).</text>
</comment>
<comment type="catalytic activity">
    <reaction evidence="3">
        <text>(sulfur carrier)-H + L-cysteine = (sulfur carrier)-SH + L-alanine</text>
        <dbReference type="Rhea" id="RHEA:43892"/>
        <dbReference type="Rhea" id="RHEA-COMP:14737"/>
        <dbReference type="Rhea" id="RHEA-COMP:14739"/>
        <dbReference type="ChEBI" id="CHEBI:29917"/>
        <dbReference type="ChEBI" id="CHEBI:35235"/>
        <dbReference type="ChEBI" id="CHEBI:57972"/>
        <dbReference type="ChEBI" id="CHEBI:64428"/>
        <dbReference type="EC" id="2.8.1.7"/>
    </reaction>
    <physiologicalReaction direction="left-to-right" evidence="6">
        <dbReference type="Rhea" id="RHEA:43893"/>
    </physiologicalReaction>
</comment>
<comment type="cofactor">
    <cofactor evidence="7">
        <name>pyridoxal 5'-phosphate</name>
        <dbReference type="ChEBI" id="CHEBI:597326"/>
    </cofactor>
</comment>
<comment type="pathway">
    <text evidence="6">Cofactor biosynthesis; iron-sulfur cluster biosynthesis.</text>
</comment>
<comment type="subunit">
    <text evidence="3">Homotetramer (PubMed:34032321). Interacts with Isd11; the interaction enhances cysteine desulfurase activity of IscS (PubMed:34032321). Interacts with IscU (PubMed:34032321). Component of a complex, at least composed of IscS, Isd11 and IscU (PubMed:34032321).</text>
</comment>
<comment type="subcellular location">
    <subcellularLocation>
        <location evidence="2">Mitochondrion</location>
    </subcellularLocation>
</comment>
<comment type="similarity">
    <text evidence="6">Belongs to the class-V pyridoxal-phosphate-dependent aminotransferase family. NifS/IscS subfamily.</text>
</comment>
<proteinExistence type="evidence at protein level"/>
<name>ISCS_PLAF7</name>
<evidence type="ECO:0000256" key="1">
    <source>
        <dbReference type="SAM" id="MobiDB-lite"/>
    </source>
</evidence>
<evidence type="ECO:0000269" key="2">
    <source>
    </source>
</evidence>
<evidence type="ECO:0000269" key="3">
    <source>
    </source>
</evidence>
<evidence type="ECO:0000303" key="4">
    <source>
    </source>
</evidence>
<evidence type="ECO:0000303" key="5">
    <source>
    </source>
</evidence>
<evidence type="ECO:0000305" key="6"/>
<evidence type="ECO:0000305" key="7">
    <source>
    </source>
</evidence>
<evidence type="ECO:0000312" key="8">
    <source>
        <dbReference type="EMBL" id="CAD51015.1"/>
    </source>
</evidence>
<evidence type="ECO:0000312" key="9">
    <source>
        <dbReference type="Proteomes" id="UP000001450"/>
    </source>
</evidence>
<protein>
    <recommendedName>
        <fullName evidence="6">Cysteine desulfurase IscS</fullName>
        <shortName evidence="5">PfIscS</shortName>
        <ecNumber evidence="3">2.8.1.7</ecNumber>
    </recommendedName>
</protein>
<reference evidence="9" key="1">
    <citation type="journal article" date="2002" name="Nature">
        <title>Genome sequence of the human malaria parasite Plasmodium falciparum.</title>
        <authorList>
            <person name="Gardner M.J."/>
            <person name="Hall N."/>
            <person name="Fung E."/>
            <person name="White O."/>
            <person name="Berriman M."/>
            <person name="Hyman R.W."/>
            <person name="Carlton J.M."/>
            <person name="Pain A."/>
            <person name="Nelson K.E."/>
            <person name="Bowman S."/>
            <person name="Paulsen I.T."/>
            <person name="James K.D."/>
            <person name="Eisen J.A."/>
            <person name="Rutherford K.M."/>
            <person name="Salzberg S.L."/>
            <person name="Craig A."/>
            <person name="Kyes S."/>
            <person name="Chan M.-S."/>
            <person name="Nene V."/>
            <person name="Shallom S.J."/>
            <person name="Suh B."/>
            <person name="Peterson J."/>
            <person name="Angiuoli S."/>
            <person name="Pertea M."/>
            <person name="Allen J."/>
            <person name="Selengut J."/>
            <person name="Haft D."/>
            <person name="Mather M.W."/>
            <person name="Vaidya A.B."/>
            <person name="Martin D.M.A."/>
            <person name="Fairlamb A.H."/>
            <person name="Fraunholz M.J."/>
            <person name="Roos D.S."/>
            <person name="Ralph S.A."/>
            <person name="McFadden G.I."/>
            <person name="Cummings L.M."/>
            <person name="Subramanian G.M."/>
            <person name="Mungall C."/>
            <person name="Venter J.C."/>
            <person name="Carucci D.J."/>
            <person name="Hoffman S.L."/>
            <person name="Newbold C."/>
            <person name="Davis R.W."/>
            <person name="Fraser C.M."/>
            <person name="Barrell B.G."/>
        </authorList>
    </citation>
    <scope>NUCLEOTIDE SEQUENCE [LARGE SCALE GENOMIC DNA]</scope>
    <source>
        <strain evidence="9">3D7</strain>
    </source>
</reference>
<reference evidence="9" key="2">
    <citation type="journal article" date="2002" name="Nature">
        <title>Sequence of Plasmodium falciparum chromosomes 1, 3-9 and 13.</title>
        <authorList>
            <person name="Hall N."/>
            <person name="Pain A."/>
            <person name="Berriman M."/>
            <person name="Churcher C.M."/>
            <person name="Harris B."/>
            <person name="Harris D."/>
            <person name="Mungall K.L."/>
            <person name="Bowman S."/>
            <person name="Atkin R."/>
            <person name="Baker S."/>
            <person name="Barron A."/>
            <person name="Brooks K."/>
            <person name="Buckee C.O."/>
            <person name="Burrows C."/>
            <person name="Cherevach I."/>
            <person name="Chillingworth C."/>
            <person name="Chillingworth T."/>
            <person name="Christodoulou Z."/>
            <person name="Clark L."/>
            <person name="Clark R."/>
            <person name="Corton C."/>
            <person name="Cronin A."/>
            <person name="Davies R.M."/>
            <person name="Davis P."/>
            <person name="Dear P."/>
            <person name="Dearden F."/>
            <person name="Doggett J."/>
            <person name="Feltwell T."/>
            <person name="Goble A."/>
            <person name="Goodhead I."/>
            <person name="Gwilliam R."/>
            <person name="Hamlin N."/>
            <person name="Hance Z."/>
            <person name="Harper D."/>
            <person name="Hauser H."/>
            <person name="Hornsby T."/>
            <person name="Holroyd S."/>
            <person name="Horrocks P."/>
            <person name="Humphray S."/>
            <person name="Jagels K."/>
            <person name="James K.D."/>
            <person name="Johnson D."/>
            <person name="Kerhornou A."/>
            <person name="Knights A."/>
            <person name="Konfortov B."/>
            <person name="Kyes S."/>
            <person name="Larke N."/>
            <person name="Lawson D."/>
            <person name="Lennard N."/>
            <person name="Line A."/>
            <person name="Maddison M."/>
            <person name="Mclean J."/>
            <person name="Mooney P."/>
            <person name="Moule S."/>
            <person name="Murphy L."/>
            <person name="Oliver K."/>
            <person name="Ormond D."/>
            <person name="Price C."/>
            <person name="Quail M.A."/>
            <person name="Rabbinowitsch E."/>
            <person name="Rajandream M.A."/>
            <person name="Rutter S."/>
            <person name="Rutherford K.M."/>
            <person name="Sanders M."/>
            <person name="Simmonds M."/>
            <person name="Seeger K."/>
            <person name="Sharp S."/>
            <person name="Smith R."/>
            <person name="Squares R."/>
            <person name="Squares S."/>
            <person name="Stevens K."/>
            <person name="Taylor K."/>
            <person name="Tivey A."/>
            <person name="Unwin L."/>
            <person name="Whitehead S."/>
            <person name="Woodward J.R."/>
            <person name="Sulston J.E."/>
            <person name="Craig A."/>
            <person name="Newbold C."/>
            <person name="Barrell B.G."/>
        </authorList>
    </citation>
    <scope>NUCLEOTIDE SEQUENCE [LARGE SCALE GENOMIC DNA]</scope>
    <source>
        <strain evidence="9">3D7</strain>
    </source>
</reference>
<reference evidence="6" key="3">
    <citation type="journal article" date="2013" name="PLoS Pathog.">
        <title>The suf iron-sulfur cluster synthesis pathway is required for apicoplast maintenance in malaria parasites.</title>
        <authorList>
            <person name="Gisselberg J.E."/>
            <person name="Dellibovi-Ragheb T.A."/>
            <person name="Matthews K.A."/>
            <person name="Bosch G."/>
            <person name="Prigge S.T."/>
        </authorList>
    </citation>
    <scope>SUBCELLULAR LOCATION</scope>
</reference>
<reference evidence="6" key="4">
    <citation type="journal article" date="2021" name="Mol. Microbiol.">
        <title>[Fe-S] biogenesis and unusual assembly of the ISC scaffold complex in the Plasmodium falciparum mitochondrion.</title>
        <authorList>
            <person name="Sadik M."/>
            <person name="Afsar M."/>
            <person name="Ramachandran R."/>
            <person name="Habib S."/>
        </authorList>
    </citation>
    <scope>FUNCTION</scope>
    <scope>CATALYTIC ACTIVITY</scope>
    <scope>COFACTOR</scope>
    <scope>SUBUNIT</scope>
    <scope>INTERACTION WITH ISD11 AND ISCU</scope>
</reference>
<gene>
    <name evidence="4 5" type="primary">IscS</name>
    <name evidence="6" type="synonym">NFS1</name>
    <name evidence="8" type="ORF">PF3D7_0727200</name>
</gene>
<sequence>MKFLQIIKHLKLQNKKNALDNFVNCRTYEHISNINKLFLNNFSSTKEHSEHGQVKHENFLNSTLKYEENSQNGSTNNLKNGKYNMYVSEGNVNINEEKYKDNNISSNNTQYNNNSSNSGSLNDEGPLWKEHIDDVVNENKKKKMNRFYLDSQATTMIDPRVLDKMLPYMTYIYGNAHSRNHFFGWESEKAVEDARTNLLNLINGKNNKEIIFTSGATESNNLALIGICTYYNKLNKQKNHIITSQIEHKCILQTCRFLQTKGFEVTYLKPDTNGLVKLDDIKNSIKDNTIMASFIFVNNEIGVIQDIENIGNLCKEKNILFHTDASQAAGKVPIDVQKMNIDLMSMSGHKLYGPKGIGALYIKRKKPNIRLNALIHGGGQERGLRSGTLPTHLIVGFGEAAKVCSLEMNRDEKKVRYFFNYVKDYLTKHLDYIVFNGCQINRYYGNMNISFLFVEGESLLMSLNEIALSSGSACTSSTLEPSYVLRSIGISEDIAHTSIRIGFNRFTTFFEVQQLCINLVKSVERLRSISPLYEMELEKKNPSNDDIPKFIWT</sequence>
<keyword id="KW-0408">Iron</keyword>
<keyword id="KW-0411">Iron-sulfur</keyword>
<keyword id="KW-0479">Metal-binding</keyword>
<keyword id="KW-0496">Mitochondrion</keyword>
<keyword id="KW-0663">Pyridoxal phosphate</keyword>
<keyword id="KW-1185">Reference proteome</keyword>
<keyword id="KW-0808">Transferase</keyword>
<accession>Q8IBI5</accession>
<feature type="chain" id="PRO_0000461956" description="Cysteine desulfurase IscS">
    <location>
        <begin position="1"/>
        <end position="553"/>
    </location>
</feature>
<feature type="region of interest" description="Disordered" evidence="1">
    <location>
        <begin position="102"/>
        <end position="125"/>
    </location>
</feature>
<feature type="compositionally biased region" description="Low complexity" evidence="1">
    <location>
        <begin position="102"/>
        <end position="122"/>
    </location>
</feature>
<dbReference type="EC" id="2.8.1.7" evidence="3"/>
<dbReference type="EMBL" id="AL844506">
    <property type="protein sequence ID" value="CAD51015.1"/>
    <property type="molecule type" value="Genomic_DNA"/>
</dbReference>
<dbReference type="RefSeq" id="XP_001349169.1">
    <property type="nucleotide sequence ID" value="XM_001349133.1"/>
</dbReference>
<dbReference type="SASBDB" id="Q8IBI5"/>
<dbReference type="SMR" id="Q8IBI5"/>
<dbReference type="FunCoup" id="Q8IBI5">
    <property type="interactions" value="525"/>
</dbReference>
<dbReference type="STRING" id="36329.Q8IBI5"/>
<dbReference type="PaxDb" id="5833-MAL7P1.150"/>
<dbReference type="EnsemblProtists" id="CAD51015">
    <property type="protein sequence ID" value="CAD51015"/>
    <property type="gene ID" value="PF3D7_0727200"/>
</dbReference>
<dbReference type="GeneID" id="2655026"/>
<dbReference type="KEGG" id="pfa:PF3D7_0727200"/>
<dbReference type="VEuPathDB" id="PlasmoDB:PF3D7_0727200"/>
<dbReference type="HOGENOM" id="CLU_003433_0_2_1"/>
<dbReference type="InParanoid" id="Q8IBI5"/>
<dbReference type="OrthoDB" id="212394at2759"/>
<dbReference type="PhylomeDB" id="Q8IBI5"/>
<dbReference type="Reactome" id="R-PFA-1362409">
    <property type="pathway name" value="Mitochondrial iron-sulfur cluster biogenesis"/>
</dbReference>
<dbReference type="Reactome" id="R-PFA-947581">
    <property type="pathway name" value="Molybdenum cofactor biosynthesis"/>
</dbReference>
<dbReference type="UniPathway" id="UPA00266"/>
<dbReference type="Proteomes" id="UP000001450">
    <property type="component" value="Chromosome 7"/>
</dbReference>
<dbReference type="GO" id="GO:0005829">
    <property type="term" value="C:cytosol"/>
    <property type="evidence" value="ECO:0000318"/>
    <property type="project" value="GO_Central"/>
</dbReference>
<dbReference type="GO" id="GO:0005739">
    <property type="term" value="C:mitochondrion"/>
    <property type="evidence" value="ECO:0000314"/>
    <property type="project" value="GeneDB"/>
</dbReference>
<dbReference type="GO" id="GO:0004123">
    <property type="term" value="F:cystathionine gamma-lyase activity"/>
    <property type="evidence" value="ECO:0000250"/>
    <property type="project" value="GeneDB"/>
</dbReference>
<dbReference type="GO" id="GO:0031071">
    <property type="term" value="F:cysteine desulfurase activity"/>
    <property type="evidence" value="ECO:0000318"/>
    <property type="project" value="GO_Central"/>
</dbReference>
<dbReference type="GO" id="GO:0051536">
    <property type="term" value="F:iron-sulfur cluster binding"/>
    <property type="evidence" value="ECO:0007669"/>
    <property type="project" value="UniProtKB-KW"/>
</dbReference>
<dbReference type="GO" id="GO:0046872">
    <property type="term" value="F:metal ion binding"/>
    <property type="evidence" value="ECO:0007669"/>
    <property type="project" value="UniProtKB-KW"/>
</dbReference>
<dbReference type="GO" id="GO:0006534">
    <property type="term" value="P:cysteine metabolic process"/>
    <property type="evidence" value="ECO:0000250"/>
    <property type="project" value="GeneDB"/>
</dbReference>
<dbReference type="GO" id="GO:0016226">
    <property type="term" value="P:iron-sulfur cluster assembly"/>
    <property type="evidence" value="ECO:0000318"/>
    <property type="project" value="GO_Central"/>
</dbReference>
<dbReference type="FunFam" id="3.40.640.10:FF:000003">
    <property type="entry name" value="Cysteine desulfurase IscS"/>
    <property type="match status" value="1"/>
</dbReference>
<dbReference type="Gene3D" id="3.90.1150.10">
    <property type="entry name" value="Aspartate Aminotransferase, domain 1"/>
    <property type="match status" value="1"/>
</dbReference>
<dbReference type="Gene3D" id="3.40.640.10">
    <property type="entry name" value="Type I PLP-dependent aspartate aminotransferase-like (Major domain)"/>
    <property type="match status" value="1"/>
</dbReference>
<dbReference type="InterPro" id="IPR000192">
    <property type="entry name" value="Aminotrans_V_dom"/>
</dbReference>
<dbReference type="InterPro" id="IPR020578">
    <property type="entry name" value="Aminotrans_V_PyrdxlP_BS"/>
</dbReference>
<dbReference type="InterPro" id="IPR015424">
    <property type="entry name" value="PyrdxlP-dep_Trfase"/>
</dbReference>
<dbReference type="InterPro" id="IPR015421">
    <property type="entry name" value="PyrdxlP-dep_Trfase_major"/>
</dbReference>
<dbReference type="InterPro" id="IPR015422">
    <property type="entry name" value="PyrdxlP-dep_Trfase_small"/>
</dbReference>
<dbReference type="NCBIfam" id="NF010611">
    <property type="entry name" value="PRK14012.1"/>
    <property type="match status" value="1"/>
</dbReference>
<dbReference type="PANTHER" id="PTHR11601:SF34">
    <property type="entry name" value="CYSTEINE DESULFURASE"/>
    <property type="match status" value="1"/>
</dbReference>
<dbReference type="PANTHER" id="PTHR11601">
    <property type="entry name" value="CYSTEINE DESULFURYLASE FAMILY MEMBER"/>
    <property type="match status" value="1"/>
</dbReference>
<dbReference type="Pfam" id="PF00266">
    <property type="entry name" value="Aminotran_5"/>
    <property type="match status" value="1"/>
</dbReference>
<dbReference type="SUPFAM" id="SSF53383">
    <property type="entry name" value="PLP-dependent transferases"/>
    <property type="match status" value="1"/>
</dbReference>
<dbReference type="PROSITE" id="PS00595">
    <property type="entry name" value="AA_TRANSFER_CLASS_5"/>
    <property type="match status" value="1"/>
</dbReference>
<organism evidence="9">
    <name type="scientific">Plasmodium falciparum (isolate 3D7)</name>
    <dbReference type="NCBI Taxonomy" id="36329"/>
    <lineage>
        <taxon>Eukaryota</taxon>
        <taxon>Sar</taxon>
        <taxon>Alveolata</taxon>
        <taxon>Apicomplexa</taxon>
        <taxon>Aconoidasida</taxon>
        <taxon>Haemosporida</taxon>
        <taxon>Plasmodiidae</taxon>
        <taxon>Plasmodium</taxon>
        <taxon>Plasmodium (Laverania)</taxon>
    </lineage>
</organism>